<keyword id="KW-0027">Amidation</keyword>
<keyword id="KW-0903">Direct protein sequencing</keyword>
<keyword id="KW-0527">Neuropeptide</keyword>
<keyword id="KW-0964">Secreted</keyword>
<reference evidence="4" key="1">
    <citation type="journal article" date="2005" name="Peptides">
        <title>Peptidomics of neurohemal organs from species of the cockroach family Blattidae: how do neuropeptides of closely related species differ?</title>
        <authorList>
            <person name="Predel R."/>
            <person name="Gaede G."/>
        </authorList>
    </citation>
    <scope>PROTEIN SEQUENCE</scope>
    <scope>MASS SPECTROMETRY</scope>
    <scope>AMIDATION AT LEU-12</scope>
    <source>
        <tissue evidence="3">Corpora allata</tissue>
    </source>
</reference>
<comment type="function">
    <text evidence="1">Mediates visceral muscle contractile activity (myotropic activity).</text>
</comment>
<comment type="subcellular location">
    <subcellularLocation>
        <location evidence="4">Secreted</location>
    </subcellularLocation>
</comment>
<comment type="mass spectrometry" mass="1447.7" method="MALDI" evidence="3"/>
<comment type="similarity">
    <text evidence="2">Belongs to the pyrokinin family.</text>
</comment>
<protein>
    <recommendedName>
        <fullName>Pyrokinin-4</fullName>
    </recommendedName>
    <alternativeName>
        <fullName>YXPRL-amide</fullName>
    </alternativeName>
</protein>
<dbReference type="GO" id="GO:0005576">
    <property type="term" value="C:extracellular region"/>
    <property type="evidence" value="ECO:0007669"/>
    <property type="project" value="UniProtKB-SubCell"/>
</dbReference>
<dbReference type="GO" id="GO:0007218">
    <property type="term" value="P:neuropeptide signaling pathway"/>
    <property type="evidence" value="ECO:0007669"/>
    <property type="project" value="UniProtKB-KW"/>
</dbReference>
<sequence length="12" mass="1449">DHLPHDVYSPRL</sequence>
<feature type="peptide" id="PRO_0000044325" description="Pyrokinin-4">
    <location>
        <begin position="1"/>
        <end position="12"/>
    </location>
</feature>
<feature type="modified residue" description="Leucine amide" evidence="3">
    <location>
        <position position="12"/>
    </location>
</feature>
<proteinExistence type="evidence at protein level"/>
<organism>
    <name type="scientific">Blatta orientalis</name>
    <name type="common">Oriental cockroach</name>
    <dbReference type="NCBI Taxonomy" id="6976"/>
    <lineage>
        <taxon>Eukaryota</taxon>
        <taxon>Metazoa</taxon>
        <taxon>Ecdysozoa</taxon>
        <taxon>Arthropoda</taxon>
        <taxon>Hexapoda</taxon>
        <taxon>Insecta</taxon>
        <taxon>Pterygota</taxon>
        <taxon>Neoptera</taxon>
        <taxon>Polyneoptera</taxon>
        <taxon>Dictyoptera</taxon>
        <taxon>Blattodea</taxon>
        <taxon>Blattoidea</taxon>
        <taxon>Blattidae</taxon>
        <taxon>Blattinae</taxon>
        <taxon>Blatta</taxon>
    </lineage>
</organism>
<name>PPK4_BLAOR</name>
<accession>P84410</accession>
<evidence type="ECO:0000250" key="1">
    <source>
        <dbReference type="UniProtKB" id="P82619"/>
    </source>
</evidence>
<evidence type="ECO:0000255" key="2"/>
<evidence type="ECO:0000269" key="3">
    <source>
    </source>
</evidence>
<evidence type="ECO:0000305" key="4"/>